<reference key="1">
    <citation type="journal article" date="2003" name="Nature">
        <title>Genome divergence in two Prochlorococcus ecotypes reflects oceanic niche differentiation.</title>
        <authorList>
            <person name="Rocap G."/>
            <person name="Larimer F.W."/>
            <person name="Lamerdin J.E."/>
            <person name="Malfatti S."/>
            <person name="Chain P."/>
            <person name="Ahlgren N.A."/>
            <person name="Arellano A."/>
            <person name="Coleman M."/>
            <person name="Hauser L."/>
            <person name="Hess W.R."/>
            <person name="Johnson Z.I."/>
            <person name="Land M.L."/>
            <person name="Lindell D."/>
            <person name="Post A.F."/>
            <person name="Regala W."/>
            <person name="Shah M."/>
            <person name="Shaw S.L."/>
            <person name="Steglich C."/>
            <person name="Sullivan M.B."/>
            <person name="Ting C.S."/>
            <person name="Tolonen A."/>
            <person name="Webb E.A."/>
            <person name="Zinser E.R."/>
            <person name="Chisholm S.W."/>
        </authorList>
    </citation>
    <scope>NUCLEOTIDE SEQUENCE [LARGE SCALE GENOMIC DNA]</scope>
    <source>
        <strain>CCMP1986 / NIES-2087 / MED4</strain>
    </source>
</reference>
<organism>
    <name type="scientific">Prochlorococcus marinus subsp. pastoris (strain CCMP1986 / NIES-2087 / MED4)</name>
    <dbReference type="NCBI Taxonomy" id="59919"/>
    <lineage>
        <taxon>Bacteria</taxon>
        <taxon>Bacillati</taxon>
        <taxon>Cyanobacteriota</taxon>
        <taxon>Cyanophyceae</taxon>
        <taxon>Synechococcales</taxon>
        <taxon>Prochlorococcaceae</taxon>
        <taxon>Prochlorococcus</taxon>
    </lineage>
</organism>
<evidence type="ECO:0000250" key="1"/>
<evidence type="ECO:0000255" key="2">
    <source>
        <dbReference type="PROSITE-ProRule" id="PRU01251"/>
    </source>
</evidence>
<evidence type="ECO:0000305" key="3"/>
<accession>Q7V2A3</accession>
<gene>
    <name type="primary">clpB</name>
    <name type="ordered locus">PMM0580</name>
</gene>
<protein>
    <recommendedName>
        <fullName>Chaperone protein ClpB</fullName>
    </recommendedName>
</protein>
<name>CLPB_PROMP</name>
<proteinExistence type="inferred from homology"/>
<comment type="function">
    <text evidence="1">Part of a stress-induced multi-chaperone system, it is involved in the recovery of the cell from heat-induced damage, in cooperation with DnaK, DnaJ and GrpE. Acts before DnaK, in the processing of protein aggregates. Protein binding stimulates the ATPase activity; ATP hydrolysis unfolds the denatured protein aggregates, which probably helps expose new hydrophobic binding sites on the surface of ClpB-bound aggregates, contributing to the solubilization and refolding of denatured protein aggregates by DnaK (By similarity).</text>
</comment>
<comment type="subunit">
    <text evidence="1">Homohexamer. The oligomerization is ATP-dependent (By similarity).</text>
</comment>
<comment type="subcellular location">
    <subcellularLocation>
        <location evidence="3">Cytoplasm</location>
    </subcellularLocation>
</comment>
<comment type="domain">
    <text evidence="1">The Clp repeat (R) domain probably functions as a substrate-discriminating domain, recruiting aggregated proteins to the ClpB hexamer and/or stabilizing bound proteins. The NBD2 domain is responsible for oligomerization, whereas the NBD1 domain stabilizes the hexamer probably in an ATP-dependent manner. The movement of the coiled-coil domain is essential for ClpB ability to rescue proteins from an aggregated state, probably by pulling apart large aggregated proteins, which are bound between the coiled-coils motifs of adjacent ClpB subunits in the functional hexamer (By similarity).</text>
</comment>
<comment type="similarity">
    <text evidence="3">Belongs to the ClpA/ClpB family.</text>
</comment>
<sequence length="860" mass="97364">MKFVPSEFSNSAWDIFILSKEIAQNNFQQNIDSENILLALIKQDLLTSKILKKNCVNIRKIETKLTSLLDAKAKMKNKQKTLFIGETTEKVFLKANDLRVSFNDVVISTEHILYGLSYDEICSELVLNTKKIPEFLELLNKMKSESTINDNFESSNETLDKFGIDLTKSARDGILDPVIGRDEEIRRTIQILSRRTKNNPVLIGEPGVGKTAIVEGLAQRIVNGDVPSSLNNRQLISIDMGSLIAGAKYRGEFEERIKNVLKKVKSSEGKIILFIDEIHTVVGAGATGGSLDASNLLKPMLARGELRCIGATTINEHKQNIEKDPALERRFQKIKINAPSVDDTISILRGLREKYEVHHSVRISDNALVAAASLSERYINDRFLPDKAIDLIDEAASRLNMIITSKPEEIDEIDRKVLQLEMENLSLQRESDNFSLERLKRINNELHDLKIRQSELNHQWQKEKEEIDEISNLKEEIESTQLKIEQAKRSFDLNKAAELEFGTLISLQKKLKIKSENLVDSFKSGEKNLLRQEVNFDDIAEVVSKWTSIPVNNLNQSEKEKLLKLELTLKEKIIGQNNAICAVSDSIKRSRTGLNDPNRPIASFLFLGPTGVGKTELSKVIAKTIFDSNSSITRLDMSEYMEKHSVSKIIGAPPGYLGFESGGQLTEAVRKNPYSLILLDEIEKAHKDVLDVLLQVLDDGIITDGQGRTISFKNSIIVLTSNLGSQSINDLSIRNEDKNEIKNIVNVELKKFFKPEFLNRLDEIIIFQNLELNELKDIAKLQLKKLENRLIKKDLNFQITDEAIDHLVKNSFDNSYGARPLKRIIQKEIETKIANNILNNNYLNKKEVYISIKDGCIFVN</sequence>
<feature type="chain" id="PRO_0000191160" description="Chaperone protein ClpB">
    <location>
        <begin position="1"/>
        <end position="860"/>
    </location>
</feature>
<feature type="domain" description="Clp R" evidence="2">
    <location>
        <begin position="5"/>
        <end position="145"/>
    </location>
</feature>
<feature type="region of interest" description="Repeat 1" evidence="2">
    <location>
        <begin position="8"/>
        <end position="72"/>
    </location>
</feature>
<feature type="region of interest" description="Repeat 2" evidence="2">
    <location>
        <begin position="84"/>
        <end position="145"/>
    </location>
</feature>
<feature type="region of interest" description="NBD1" evidence="1">
    <location>
        <begin position="157"/>
        <end position="338"/>
    </location>
</feature>
<feature type="region of interest" description="Linker" evidence="1">
    <location>
        <begin position="339"/>
        <end position="548"/>
    </location>
</feature>
<feature type="region of interest" description="NBD2" evidence="1">
    <location>
        <begin position="558"/>
        <end position="769"/>
    </location>
</feature>
<feature type="region of interest" description="C-terminal" evidence="1">
    <location>
        <begin position="770"/>
        <end position="860"/>
    </location>
</feature>
<feature type="coiled-coil region" evidence="1">
    <location>
        <begin position="389"/>
        <end position="523"/>
    </location>
</feature>
<feature type="binding site" evidence="1">
    <location>
        <begin position="204"/>
        <end position="211"/>
    </location>
    <ligand>
        <name>ATP</name>
        <dbReference type="ChEBI" id="CHEBI:30616"/>
        <label>1</label>
    </ligand>
</feature>
<feature type="binding site" evidence="1">
    <location>
        <begin position="608"/>
        <end position="615"/>
    </location>
    <ligand>
        <name>ATP</name>
        <dbReference type="ChEBI" id="CHEBI:30616"/>
        <label>2</label>
    </ligand>
</feature>
<keyword id="KW-0067">ATP-binding</keyword>
<keyword id="KW-0143">Chaperone</keyword>
<keyword id="KW-0175">Coiled coil</keyword>
<keyword id="KW-0963">Cytoplasm</keyword>
<keyword id="KW-0547">Nucleotide-binding</keyword>
<keyword id="KW-0677">Repeat</keyword>
<keyword id="KW-0346">Stress response</keyword>
<dbReference type="EMBL" id="BX548174">
    <property type="protein sequence ID" value="CAE19039.1"/>
    <property type="molecule type" value="Genomic_DNA"/>
</dbReference>
<dbReference type="RefSeq" id="WP_011132214.1">
    <property type="nucleotide sequence ID" value="NC_005072.1"/>
</dbReference>
<dbReference type="SMR" id="Q7V2A3"/>
<dbReference type="STRING" id="59919.PMM0580"/>
<dbReference type="KEGG" id="pmm:PMM0580"/>
<dbReference type="eggNOG" id="COG0542">
    <property type="taxonomic scope" value="Bacteria"/>
</dbReference>
<dbReference type="HOGENOM" id="CLU_005070_4_2_3"/>
<dbReference type="OrthoDB" id="9803641at2"/>
<dbReference type="Proteomes" id="UP000001026">
    <property type="component" value="Chromosome"/>
</dbReference>
<dbReference type="GO" id="GO:0005737">
    <property type="term" value="C:cytoplasm"/>
    <property type="evidence" value="ECO:0007669"/>
    <property type="project" value="UniProtKB-SubCell"/>
</dbReference>
<dbReference type="GO" id="GO:0005524">
    <property type="term" value="F:ATP binding"/>
    <property type="evidence" value="ECO:0007669"/>
    <property type="project" value="UniProtKB-KW"/>
</dbReference>
<dbReference type="GO" id="GO:0016887">
    <property type="term" value="F:ATP hydrolysis activity"/>
    <property type="evidence" value="ECO:0007669"/>
    <property type="project" value="InterPro"/>
</dbReference>
<dbReference type="GO" id="GO:0034605">
    <property type="term" value="P:cellular response to heat"/>
    <property type="evidence" value="ECO:0007669"/>
    <property type="project" value="TreeGrafter"/>
</dbReference>
<dbReference type="CDD" id="cd00009">
    <property type="entry name" value="AAA"/>
    <property type="match status" value="1"/>
</dbReference>
<dbReference type="CDD" id="cd19499">
    <property type="entry name" value="RecA-like_ClpB_Hsp104-like"/>
    <property type="match status" value="1"/>
</dbReference>
<dbReference type="FunFam" id="3.40.50.300:FF:000120">
    <property type="entry name" value="ATP-dependent chaperone ClpB"/>
    <property type="match status" value="1"/>
</dbReference>
<dbReference type="FunFam" id="3.40.50.300:FF:000025">
    <property type="entry name" value="ATP-dependent Clp protease subunit"/>
    <property type="match status" value="1"/>
</dbReference>
<dbReference type="FunFam" id="3.40.50.300:FF:000010">
    <property type="entry name" value="Chaperone clpB 1, putative"/>
    <property type="match status" value="1"/>
</dbReference>
<dbReference type="Gene3D" id="1.10.8.60">
    <property type="match status" value="1"/>
</dbReference>
<dbReference type="Gene3D" id="1.10.1780.10">
    <property type="entry name" value="Clp, N-terminal domain"/>
    <property type="match status" value="1"/>
</dbReference>
<dbReference type="Gene3D" id="3.40.50.300">
    <property type="entry name" value="P-loop containing nucleotide triphosphate hydrolases"/>
    <property type="match status" value="3"/>
</dbReference>
<dbReference type="InterPro" id="IPR003593">
    <property type="entry name" value="AAA+_ATPase"/>
</dbReference>
<dbReference type="InterPro" id="IPR003959">
    <property type="entry name" value="ATPase_AAA_core"/>
</dbReference>
<dbReference type="InterPro" id="IPR019489">
    <property type="entry name" value="Clp_ATPase_C"/>
</dbReference>
<dbReference type="InterPro" id="IPR036628">
    <property type="entry name" value="Clp_N_dom_sf"/>
</dbReference>
<dbReference type="InterPro" id="IPR004176">
    <property type="entry name" value="Clp_R_dom"/>
</dbReference>
<dbReference type="InterPro" id="IPR001270">
    <property type="entry name" value="ClpA/B"/>
</dbReference>
<dbReference type="InterPro" id="IPR018368">
    <property type="entry name" value="ClpA/B_CS1"/>
</dbReference>
<dbReference type="InterPro" id="IPR028299">
    <property type="entry name" value="ClpA/B_CS2"/>
</dbReference>
<dbReference type="InterPro" id="IPR041546">
    <property type="entry name" value="ClpA/ClpB_AAA_lid"/>
</dbReference>
<dbReference type="InterPro" id="IPR050130">
    <property type="entry name" value="ClpA_ClpB"/>
</dbReference>
<dbReference type="InterPro" id="IPR027417">
    <property type="entry name" value="P-loop_NTPase"/>
</dbReference>
<dbReference type="PANTHER" id="PTHR11638">
    <property type="entry name" value="ATP-DEPENDENT CLP PROTEASE"/>
    <property type="match status" value="1"/>
</dbReference>
<dbReference type="PANTHER" id="PTHR11638:SF18">
    <property type="entry name" value="HEAT SHOCK PROTEIN 104"/>
    <property type="match status" value="1"/>
</dbReference>
<dbReference type="Pfam" id="PF00004">
    <property type="entry name" value="AAA"/>
    <property type="match status" value="1"/>
</dbReference>
<dbReference type="Pfam" id="PF07724">
    <property type="entry name" value="AAA_2"/>
    <property type="match status" value="1"/>
</dbReference>
<dbReference type="Pfam" id="PF17871">
    <property type="entry name" value="AAA_lid_9"/>
    <property type="match status" value="1"/>
</dbReference>
<dbReference type="Pfam" id="PF02861">
    <property type="entry name" value="Clp_N"/>
    <property type="match status" value="1"/>
</dbReference>
<dbReference type="Pfam" id="PF10431">
    <property type="entry name" value="ClpB_D2-small"/>
    <property type="match status" value="1"/>
</dbReference>
<dbReference type="PRINTS" id="PR00300">
    <property type="entry name" value="CLPPROTEASEA"/>
</dbReference>
<dbReference type="SMART" id="SM00382">
    <property type="entry name" value="AAA"/>
    <property type="match status" value="2"/>
</dbReference>
<dbReference type="SMART" id="SM01086">
    <property type="entry name" value="ClpB_D2-small"/>
    <property type="match status" value="1"/>
</dbReference>
<dbReference type="SUPFAM" id="SSF81923">
    <property type="entry name" value="Double Clp-N motif"/>
    <property type="match status" value="1"/>
</dbReference>
<dbReference type="SUPFAM" id="SSF52540">
    <property type="entry name" value="P-loop containing nucleoside triphosphate hydrolases"/>
    <property type="match status" value="2"/>
</dbReference>
<dbReference type="PROSITE" id="PS51903">
    <property type="entry name" value="CLP_R"/>
    <property type="match status" value="1"/>
</dbReference>
<dbReference type="PROSITE" id="PS00870">
    <property type="entry name" value="CLPAB_1"/>
    <property type="match status" value="1"/>
</dbReference>
<dbReference type="PROSITE" id="PS00871">
    <property type="entry name" value="CLPAB_2"/>
    <property type="match status" value="1"/>
</dbReference>